<organism>
    <name type="scientific">Homo sapiens</name>
    <name type="common">Human</name>
    <dbReference type="NCBI Taxonomy" id="9606"/>
    <lineage>
        <taxon>Eukaryota</taxon>
        <taxon>Metazoa</taxon>
        <taxon>Chordata</taxon>
        <taxon>Craniata</taxon>
        <taxon>Vertebrata</taxon>
        <taxon>Euteleostomi</taxon>
        <taxon>Mammalia</taxon>
        <taxon>Eutheria</taxon>
        <taxon>Euarchontoglires</taxon>
        <taxon>Primates</taxon>
        <taxon>Haplorrhini</taxon>
        <taxon>Catarrhini</taxon>
        <taxon>Hominidae</taxon>
        <taxon>Homo</taxon>
    </lineage>
</organism>
<sequence length="910" mass="102545">MDTAEEDICRVCRSEGTPEKPLYHPCVCTGSIKFIHQECLVQWLKHSRKEYCELCKHRFAFTPIYSPDMPSRLPIQDIFAGLVTSIGTAIRYWFHYTLVAFAWLGVVPLTACRIYKCLFTGSVSSLLTLPLDMLSTENLLADCLQGCFVVTCTLCAFISLVWLREQIVHGGAPIWLEHAAPPFNAAGHHQNEAPAGGNGAENVAADQPANPPAENAVVGENPDAQDDQAEEEEEDNEEEDDAGVEDAADANNGAQDDMNWNALEWDRAAEELTWERMLGLDGSLVFLEHVFWVVSLNTLFILVFAFCPYHIGHFSLVGLGFEEHVQASHFEGLITTIVGYILLAITLIICHGLATLVKFHRSRRLLGVCYIVVKVSLLVVVEIGVFPLICGWWLDICSLEMFDATLKDRELSFQSAPGTTMFLHWLVGMVYVFYFASFILLLREVLRPGVLWFLRNLNDPDFNPVQEMIHLPIYRHLRRFILSVIVFGSIVLLMLWLPIRIIKSVLPNFLPYNVMLYSDAPVSELSLELLLLQVVLPALLEQGHTRQWLKGLVRAWTVTAGYLLDLHSYLLGDQEENENSANQQVNNNQHARNNNAIPVVGEGLHAAHQAILQQGGPVGFQPYRRPLNFPLRIFLLIVFMCITLLIASLICLTLPVFAGRWLMSFWTGTAKIHELYTAACGLYVCWLTIRAVTVMVAWMPQGRRVIFQKVKEWSLMIMKTLIVAVLLAGVVPLLLGLLFELVIVAPLRVPLDQTPLFYPWQDWALGVLHAKIIAAITLMGPQWWLKTVIEQVYANGIRNIDLHYIVRKLAAPVISVLLLSLCVPYVIASGVVPLLGVTAEMQNLVHRRIYPFLLMVVVLMAILSFQVRQFKRLYEHIKNDKYLVGQRLVNYERKSGKQGSSPPPPQSSQE</sequence>
<protein>
    <recommendedName>
        <fullName>E3 ubiquitin-protein ligase MARCHF6</fullName>
        <ecNumber evidence="5 7 9 10 12">2.3.2.27</ecNumber>
    </recommendedName>
    <alternativeName>
        <fullName>Doa10 homolog</fullName>
    </alternativeName>
    <alternativeName>
        <fullName>Membrane-associated RING finger protein 6</fullName>
    </alternativeName>
    <alternativeName>
        <fullName>Membrane-associated RING-CH protein VI</fullName>
        <shortName evidence="19">MARCH-VI</shortName>
    </alternativeName>
    <alternativeName>
        <fullName evidence="18 19 20">Protein TEB-4</fullName>
    </alternativeName>
    <alternativeName>
        <fullName>RING finger protein 176</fullName>
    </alternativeName>
    <alternativeName>
        <fullName evidence="21">RING-type E3 ubiquitin transferase MARCHF6</fullName>
    </alternativeName>
</protein>
<feature type="chain" id="PRO_0000274298" description="E3 ubiquitin-protein ligase MARCHF6">
    <location>
        <begin position="1"/>
        <end position="910"/>
    </location>
</feature>
<feature type="topological domain" description="Cytoplasmic" evidence="22 23">
    <location>
        <begin position="1"/>
        <end position="91"/>
    </location>
</feature>
<feature type="transmembrane region" description="Helical" evidence="2">
    <location>
        <begin position="92"/>
        <end position="112"/>
    </location>
</feature>
<feature type="topological domain" description="Extracellular" evidence="2">
    <location>
        <begin position="113"/>
        <end position="142"/>
    </location>
</feature>
<feature type="transmembrane region" description="Helical" evidence="2">
    <location>
        <begin position="143"/>
        <end position="163"/>
    </location>
</feature>
<feature type="topological domain" description="Cytoplasmic" evidence="2">
    <location>
        <begin position="164"/>
        <end position="283"/>
    </location>
</feature>
<feature type="transmembrane region" description="Helical" evidence="2">
    <location>
        <begin position="284"/>
        <end position="304"/>
    </location>
</feature>
<feature type="topological domain" description="Extracellular" evidence="2">
    <location>
        <begin position="305"/>
        <end position="336"/>
    </location>
</feature>
<feature type="transmembrane region" description="Helical" evidence="2">
    <location>
        <begin position="337"/>
        <end position="357"/>
    </location>
</feature>
<feature type="topological domain" description="Cytoplasmic" evidence="2">
    <location>
        <begin position="358"/>
        <end position="376"/>
    </location>
</feature>
<feature type="transmembrane region" description="Helical" evidence="2">
    <location>
        <begin position="377"/>
        <end position="397"/>
    </location>
</feature>
<feature type="topological domain" description="Extracellular" evidence="2">
    <location>
        <begin position="398"/>
        <end position="421"/>
    </location>
</feature>
<feature type="transmembrane region" description="Helical" evidence="2">
    <location>
        <begin position="422"/>
        <end position="442"/>
    </location>
</feature>
<feature type="topological domain" description="Cytoplasmic" evidence="2">
    <location>
        <begin position="443"/>
        <end position="480"/>
    </location>
</feature>
<feature type="transmembrane region" description="Helical" evidence="2">
    <location>
        <begin position="481"/>
        <end position="501"/>
    </location>
</feature>
<feature type="topological domain" description="Extracellular" evidence="2">
    <location>
        <begin position="502"/>
        <end position="519"/>
    </location>
</feature>
<feature type="transmembrane region" description="Helical" evidence="2">
    <location>
        <begin position="520"/>
        <end position="540"/>
    </location>
</feature>
<feature type="topological domain" description="Cytoplasmic" evidence="2">
    <location>
        <begin position="541"/>
        <end position="632"/>
    </location>
</feature>
<feature type="transmembrane region" description="Helical" evidence="2">
    <location>
        <begin position="633"/>
        <end position="653"/>
    </location>
</feature>
<feature type="topological domain" description="Extracellular" evidence="2">
    <location>
        <begin position="654"/>
        <end position="678"/>
    </location>
</feature>
<feature type="transmembrane region" description="Helical" evidence="2">
    <location>
        <begin position="679"/>
        <end position="699"/>
    </location>
</feature>
<feature type="topological domain" description="Cytoplasmic" evidence="2">
    <location>
        <begin position="700"/>
        <end position="721"/>
    </location>
</feature>
<feature type="transmembrane region" description="Helical" evidence="2">
    <location>
        <begin position="722"/>
        <end position="742"/>
    </location>
</feature>
<feature type="topological domain" description="Extracellular" evidence="2">
    <location>
        <begin position="743"/>
        <end position="764"/>
    </location>
</feature>
<feature type="transmembrane region" description="Helical" evidence="2">
    <location>
        <begin position="765"/>
        <end position="785"/>
    </location>
</feature>
<feature type="topological domain" description="Cytoplasmic" evidence="2">
    <location>
        <begin position="786"/>
        <end position="815"/>
    </location>
</feature>
<feature type="transmembrane region" description="Helical" evidence="2">
    <location>
        <begin position="816"/>
        <end position="836"/>
    </location>
</feature>
<feature type="topological domain" description="Extracellular" evidence="2">
    <location>
        <begin position="837"/>
        <end position="848"/>
    </location>
</feature>
<feature type="transmembrane region" description="Helical" evidence="2">
    <location>
        <begin position="849"/>
        <end position="869"/>
    </location>
</feature>
<feature type="topological domain" description="Cytoplasmic" evidence="23">
    <location>
        <begin position="870"/>
        <end position="910"/>
    </location>
</feature>
<feature type="zinc finger region" description="RING-CH-type" evidence="3">
    <location>
        <begin position="1"/>
        <end position="62"/>
    </location>
</feature>
<feature type="region of interest" description="Disordered" evidence="4">
    <location>
        <begin position="185"/>
        <end position="256"/>
    </location>
</feature>
<feature type="compositionally biased region" description="Acidic residues" evidence="4">
    <location>
        <begin position="223"/>
        <end position="248"/>
    </location>
</feature>
<feature type="binding site" evidence="3">
    <location>
        <position position="9"/>
    </location>
    <ligand>
        <name>Zn(2+)</name>
        <dbReference type="ChEBI" id="CHEBI:29105"/>
        <label>1</label>
    </ligand>
</feature>
<feature type="binding site" evidence="3">
    <location>
        <position position="12"/>
    </location>
    <ligand>
        <name>Zn(2+)</name>
        <dbReference type="ChEBI" id="CHEBI:29105"/>
        <label>1</label>
    </ligand>
</feature>
<feature type="binding site" evidence="3">
    <location>
        <position position="26"/>
    </location>
    <ligand>
        <name>Zn(2+)</name>
        <dbReference type="ChEBI" id="CHEBI:29105"/>
        <label>2</label>
    </ligand>
</feature>
<feature type="binding site" evidence="3">
    <location>
        <position position="28"/>
    </location>
    <ligand>
        <name>Zn(2+)</name>
        <dbReference type="ChEBI" id="CHEBI:29105"/>
        <label>2</label>
    </ligand>
</feature>
<feature type="binding site" evidence="3">
    <location>
        <position position="36"/>
    </location>
    <ligand>
        <name>Zn(2+)</name>
        <dbReference type="ChEBI" id="CHEBI:29105"/>
        <label>1</label>
    </ligand>
</feature>
<feature type="binding site" evidence="3">
    <location>
        <position position="39"/>
    </location>
    <ligand>
        <name>Zn(2+)</name>
        <dbReference type="ChEBI" id="CHEBI:29105"/>
        <label>1</label>
    </ligand>
</feature>
<feature type="binding site" evidence="3">
    <location>
        <position position="52"/>
    </location>
    <ligand>
        <name>Zn(2+)</name>
        <dbReference type="ChEBI" id="CHEBI:29105"/>
        <label>2</label>
    </ligand>
</feature>
<feature type="binding site" evidence="3">
    <location>
        <position position="55"/>
    </location>
    <ligand>
        <name>Zn(2+)</name>
        <dbReference type="ChEBI" id="CHEBI:29105"/>
        <label>2</label>
    </ligand>
</feature>
<feature type="modified residue" description="N-acetylmethionine" evidence="25">
    <location>
        <position position="1"/>
    </location>
</feature>
<feature type="splice variant" id="VSP_047035" description="In isoform 3." evidence="17">
    <original>DICRVCRSEGTPEKPLYHPCVCTGSIKFIHQECLVQWLKHSRKEYCELCKHRFAFTPIYSPDMPSRLPIQDIFAGLVTSIGTAIRYWFHYTLVAFAWLGVVPLTAC</original>
    <variation>G</variation>
    <location>
        <begin position="7"/>
        <end position="112"/>
    </location>
</feature>
<feature type="splice variant" id="VSP_047036" description="In isoform 2." evidence="17">
    <original>IYSPDMPSRLPIQDIFAGLVTSIGTAIRYWFHYTLVAFAWLGVVPLTAC</original>
    <variation>S</variation>
    <location>
        <begin position="64"/>
        <end position="112"/>
    </location>
</feature>
<feature type="sequence variant" id="VAR_030251" description="In dbSNP:rs1062914." evidence="16">
    <original>P</original>
    <variation>L</variation>
    <location>
        <position position="622"/>
    </location>
</feature>
<feature type="mutagenesis site" description="Abolished auto-ubiquitination. Loss of ubiquitin ligase activity." evidence="5 7 9 10 13">
    <original>C</original>
    <variation>A</variation>
    <location>
        <position position="9"/>
    </location>
</feature>
<feature type="mutagenesis site" description="Complete loss of Ac/N-degron recognition." evidence="15">
    <original>L</original>
    <variation>A</variation>
    <location>
        <position position="571"/>
    </location>
</feature>
<feature type="mutagenesis site" description="Does not restore the degradation of PLIN2 in MARCHF6-knockout cells." evidence="13">
    <original>G</original>
    <variation>A</variation>
    <location>
        <position position="885"/>
    </location>
</feature>
<feature type="mutagenesis site" description="Does not restore the degradation of PLIN2 in MARCHF6-knockout cells." evidence="13">
    <original>L</original>
    <variation>A</variation>
    <location>
        <position position="888"/>
    </location>
</feature>
<feature type="sequence conflict" description="In Ref. 6; AAB66840." evidence="21" ref="6">
    <original>V</original>
    <variation>VG</variation>
    <location>
        <position position="380"/>
    </location>
</feature>
<feature type="sequence conflict" description="In Ref. 6; AAB66840." evidence="21" ref="6">
    <original>G</original>
    <variation>GS</variation>
    <location>
        <position position="384"/>
    </location>
</feature>
<feature type="sequence conflict" description="In Ref. 6; AAB66840." evidence="21" ref="6">
    <original>C</original>
    <variation>WW</variation>
    <location>
        <position position="390"/>
    </location>
</feature>
<feature type="sequence conflict" description="In Ref. 6; AAB66840." evidence="21" ref="6">
    <original>D</original>
    <variation>G</variation>
    <location>
        <position position="395"/>
    </location>
</feature>
<feature type="sequence conflict" description="In Ref. 6; AAB66840." evidence="21" ref="6">
    <original>L</original>
    <variation>LG</variation>
    <location>
        <position position="399"/>
    </location>
</feature>
<feature type="sequence conflict" description="In Ref. 6; AAB66840." evidence="21" ref="6">
    <original>R</original>
    <variation>K</variation>
    <location>
        <position position="546"/>
    </location>
</feature>
<comment type="function">
    <text evidence="1 5 6 7 8 9 10 12 13 14 15">Endoplasmic reticulum membrane-associated E3 ubiquitin ligase that plays a critical role in mitigating endoplasmic reticulum stress, the regulation of cholesterol and lipid homeostasis, and ferroptosis (PubMed:25088257, PubMed:35941365, PubMed:39216628). Acts as a pivotal component of both the Ac/N-degron pathway (targeting the N-terminal acetyl group of substrates) and the ER-associated protein degradation-cytosol (ERAD-C) pathway (targeting misfolded substrates) (PubMed:30425097, PubMed:35941365). For instance, mediates the degradation of Ac/N-degron-bearing proteins such as the G-protein regulator RGS2 and the lipid droplet protein PLIN2 (PubMed:39216628). Suppresses endoplasmic reticulum stress and ferroptosis through cytosolic POMC degradation (By similarity). Prevents ferroptosis by acting as a NADPH sensor during lipid peroxidation through its C-terminal regulatory region (PubMed:35941365). Facilitates also the degradation of selected endoplasmic reticulum proteins by associating with signal peptide peptidase for the turnover of endogenous tail-anchored proteins (PubMed:29519897). Promotes ubiquitination of DIO2, leading to its degradation (PubMed:19651899). By ubiquitinating and thereby modulating the stability of many proteins of the cholesterol pathway including SQLE, CYP51A1, CYP11A1 and HMGCR, acts as a crucial post-translational regulator of cholesterol synthesis (PubMed:24449766, PubMed:31904814, PubMed:36958722).</text>
</comment>
<comment type="catalytic activity">
    <reaction evidence="5 9 12">
        <text>S-ubiquitinyl-[E2 ubiquitin-conjugating enzyme]-L-cysteine + [acceptor protein]-L-lysine = [E2 ubiquitin-conjugating enzyme]-L-cysteine + N(6)-ubiquitinyl-[acceptor protein]-L-lysine.</text>
        <dbReference type="EC" id="2.3.2.27"/>
    </reaction>
</comment>
<comment type="pathway">
    <text evidence="5">Protein modification; protein ubiquitination.</text>
</comment>
<comment type="subunit">
    <text evidence="6 7">Interacts with DIO2 (PubMed:19651899). Interacts with SQLE (PubMed:24449766).</text>
</comment>
<comment type="interaction">
    <interactant intactId="EBI-2684600">
        <id>O60337</id>
    </interactant>
    <interactant intactId="EBI-11277970">
        <id>Q9UHX3</id>
        <label>ADGRE2</label>
    </interactant>
    <organismsDiffer>false</organismsDiffer>
    <experiments>3</experiments>
</comment>
<comment type="interaction">
    <interactant intactId="EBI-2684600">
        <id>O60337</id>
    </interactant>
    <interactant intactId="EBI-16037474">
        <id>P41220-1</id>
        <label>RGS2</label>
    </interactant>
    <organismsDiffer>false</organismsDiffer>
    <experiments>3</experiments>
</comment>
<comment type="subcellular location">
    <subcellularLocation>
        <location evidence="5">Endoplasmic reticulum membrane</location>
        <topology evidence="5">Multi-pass membrane protein</topology>
    </subcellularLocation>
</comment>
<comment type="alternative products">
    <event type="alternative splicing"/>
    <isoform>
        <id>O60337-4</id>
        <name>1</name>
        <sequence type="displayed"/>
    </isoform>
    <isoform>
        <id>O60337-5</id>
        <name>2</name>
        <sequence type="described" ref="VSP_047036"/>
    </isoform>
    <isoform>
        <id>O60337-6</id>
        <name>3</name>
        <sequence type="described" ref="VSP_047035"/>
    </isoform>
</comment>
<comment type="tissue specificity">
    <text evidence="5">Present in brain (at protein level).</text>
</comment>
<comment type="domain">
    <text evidence="5 7">The RING-CH-type zinc finger domain is required for E3 ligase activity.</text>
</comment>
<comment type="PTM">
    <text evidence="5">Auto-ubiquitinated, which results in proteasomal degradation (PubMed:15673284). Deubiquitinated by USP19; protecting MARCHF6 from p97-mediated proteasomal degradation.</text>
</comment>
<comment type="disease" evidence="11">
    <disease id="DI-05690">
        <name>Epilepsy, familial adult myoclonic, 3</name>
        <acronym>FAME3</acronym>
        <description>A form of familial myoclonic epilepsy, a neurologic disorder characterized by cortical hand tremors, myoclonic jerks and occasional generalized or focal seizures with a non-progressive or very slowly progressive disease course. Usually, myoclonic tremor is the presenting symptom, characterized by tremulous finger movements and myoclonic jerks of the limbs increased by action and posture. In a minority of patients, seizures are the presenting symptom. Some patients exhibit mild cognitive impairment. FAME3 inheritance is autosomal dominant.</description>
        <dbReference type="MIM" id="613608"/>
    </disease>
    <text>The disease is caused by variants affecting the gene represented in this entry.</text>
</comment>
<comment type="sequence caution" evidence="21">
    <conflict type="erroneous initiation">
        <sequence resource="EMBL-CDS" id="AAB66840"/>
    </conflict>
    <text>Truncated N-terminus.</text>
</comment>
<comment type="sequence caution" evidence="21">
    <conflict type="frameshift">
        <sequence resource="EMBL-CDS" id="AAB66840"/>
    </conflict>
</comment>
<comment type="sequence caution" evidence="21">
    <conflict type="erroneous initiation">
        <sequence resource="EMBL-CDS" id="BAA25523"/>
    </conflict>
    <text>Extended N-terminus.</text>
</comment>
<keyword id="KW-0007">Acetylation</keyword>
<keyword id="KW-0025">Alternative splicing</keyword>
<keyword id="KW-0256">Endoplasmic reticulum</keyword>
<keyword id="KW-0887">Epilepsy</keyword>
<keyword id="KW-0472">Membrane</keyword>
<keyword id="KW-0479">Metal-binding</keyword>
<keyword id="KW-1267">Proteomics identification</keyword>
<keyword id="KW-1185">Reference proteome</keyword>
<keyword id="KW-0808">Transferase</keyword>
<keyword id="KW-0812">Transmembrane</keyword>
<keyword id="KW-1133">Transmembrane helix</keyword>
<keyword id="KW-0832">Ubl conjugation</keyword>
<keyword id="KW-0833">Ubl conjugation pathway</keyword>
<keyword id="KW-0862">Zinc</keyword>
<keyword id="KW-0863">Zinc-finger</keyword>
<evidence type="ECO:0000250" key="1">
    <source>
        <dbReference type="UniProtKB" id="Q6ZQ89"/>
    </source>
</evidence>
<evidence type="ECO:0000255" key="2"/>
<evidence type="ECO:0000255" key="3">
    <source>
        <dbReference type="PROSITE-ProRule" id="PRU00623"/>
    </source>
</evidence>
<evidence type="ECO:0000256" key="4">
    <source>
        <dbReference type="SAM" id="MobiDB-lite"/>
    </source>
</evidence>
<evidence type="ECO:0000269" key="5">
    <source>
    </source>
</evidence>
<evidence type="ECO:0000269" key="6">
    <source>
    </source>
</evidence>
<evidence type="ECO:0000269" key="7">
    <source>
    </source>
</evidence>
<evidence type="ECO:0000269" key="8">
    <source>
    </source>
</evidence>
<evidence type="ECO:0000269" key="9">
    <source>
    </source>
</evidence>
<evidence type="ECO:0000269" key="10">
    <source>
    </source>
</evidence>
<evidence type="ECO:0000269" key="11">
    <source>
    </source>
</evidence>
<evidence type="ECO:0000269" key="12">
    <source>
    </source>
</evidence>
<evidence type="ECO:0000269" key="13">
    <source>
    </source>
</evidence>
<evidence type="ECO:0000269" key="14">
    <source>
    </source>
</evidence>
<evidence type="ECO:0000269" key="15">
    <source>
    </source>
</evidence>
<evidence type="ECO:0000269" key="16">
    <source ref="6"/>
</evidence>
<evidence type="ECO:0000303" key="17">
    <source>
    </source>
</evidence>
<evidence type="ECO:0000303" key="18">
    <source>
    </source>
</evidence>
<evidence type="ECO:0000303" key="19">
    <source>
    </source>
</evidence>
<evidence type="ECO:0000303" key="20">
    <source>
    </source>
</evidence>
<evidence type="ECO:0000305" key="21"/>
<evidence type="ECO:0000305" key="22">
    <source>
    </source>
</evidence>
<evidence type="ECO:0000305" key="23">
    <source>
    </source>
</evidence>
<evidence type="ECO:0000312" key="24">
    <source>
        <dbReference type="HGNC" id="HGNC:30550"/>
    </source>
</evidence>
<evidence type="ECO:0007744" key="25">
    <source>
    </source>
</evidence>
<proteinExistence type="evidence at protein level"/>
<reference key="1">
    <citation type="journal article" date="1998" name="DNA Res.">
        <title>Prediction of the coding sequences of unidentified human genes. IX. The complete sequences of 100 new cDNA clones from brain which can code for large proteins in vitro.</title>
        <authorList>
            <person name="Nagase T."/>
            <person name="Ishikawa K."/>
            <person name="Miyajima N."/>
            <person name="Tanaka A."/>
            <person name="Kotani H."/>
            <person name="Nomura N."/>
            <person name="Ohara O."/>
        </authorList>
    </citation>
    <scope>NUCLEOTIDE SEQUENCE [LARGE SCALE MRNA] (ISOFORM 1)</scope>
    <source>
        <tissue>Brain</tissue>
    </source>
</reference>
<reference key="2">
    <citation type="journal article" date="2004" name="Nat. Genet.">
        <title>Complete sequencing and characterization of 21,243 full-length human cDNAs.</title>
        <authorList>
            <person name="Ota T."/>
            <person name="Suzuki Y."/>
            <person name="Nishikawa T."/>
            <person name="Otsuki T."/>
            <person name="Sugiyama T."/>
            <person name="Irie R."/>
            <person name="Wakamatsu A."/>
            <person name="Hayashi K."/>
            <person name="Sato H."/>
            <person name="Nagai K."/>
            <person name="Kimura K."/>
            <person name="Makita H."/>
            <person name="Sekine M."/>
            <person name="Obayashi M."/>
            <person name="Nishi T."/>
            <person name="Shibahara T."/>
            <person name="Tanaka T."/>
            <person name="Ishii S."/>
            <person name="Yamamoto J."/>
            <person name="Saito K."/>
            <person name="Kawai Y."/>
            <person name="Isono Y."/>
            <person name="Nakamura Y."/>
            <person name="Nagahari K."/>
            <person name="Murakami K."/>
            <person name="Yasuda T."/>
            <person name="Iwayanagi T."/>
            <person name="Wagatsuma M."/>
            <person name="Shiratori A."/>
            <person name="Sudo H."/>
            <person name="Hosoiri T."/>
            <person name="Kaku Y."/>
            <person name="Kodaira H."/>
            <person name="Kondo H."/>
            <person name="Sugawara M."/>
            <person name="Takahashi M."/>
            <person name="Kanda K."/>
            <person name="Yokoi T."/>
            <person name="Furuya T."/>
            <person name="Kikkawa E."/>
            <person name="Omura Y."/>
            <person name="Abe K."/>
            <person name="Kamihara K."/>
            <person name="Katsuta N."/>
            <person name="Sato K."/>
            <person name="Tanikawa M."/>
            <person name="Yamazaki M."/>
            <person name="Ninomiya K."/>
            <person name="Ishibashi T."/>
            <person name="Yamashita H."/>
            <person name="Murakawa K."/>
            <person name="Fujimori K."/>
            <person name="Tanai H."/>
            <person name="Kimata M."/>
            <person name="Watanabe M."/>
            <person name="Hiraoka S."/>
            <person name="Chiba Y."/>
            <person name="Ishida S."/>
            <person name="Ono Y."/>
            <person name="Takiguchi S."/>
            <person name="Watanabe S."/>
            <person name="Yosida M."/>
            <person name="Hotuta T."/>
            <person name="Kusano J."/>
            <person name="Kanehori K."/>
            <person name="Takahashi-Fujii A."/>
            <person name="Hara H."/>
            <person name="Tanase T.-O."/>
            <person name="Nomura Y."/>
            <person name="Togiya S."/>
            <person name="Komai F."/>
            <person name="Hara R."/>
            <person name="Takeuchi K."/>
            <person name="Arita M."/>
            <person name="Imose N."/>
            <person name="Musashino K."/>
            <person name="Yuuki H."/>
            <person name="Oshima A."/>
            <person name="Sasaki N."/>
            <person name="Aotsuka S."/>
            <person name="Yoshikawa Y."/>
            <person name="Matsunawa H."/>
            <person name="Ichihara T."/>
            <person name="Shiohata N."/>
            <person name="Sano S."/>
            <person name="Moriya S."/>
            <person name="Momiyama H."/>
            <person name="Satoh N."/>
            <person name="Takami S."/>
            <person name="Terashima Y."/>
            <person name="Suzuki O."/>
            <person name="Nakagawa S."/>
            <person name="Senoh A."/>
            <person name="Mizoguchi H."/>
            <person name="Goto Y."/>
            <person name="Shimizu F."/>
            <person name="Wakebe H."/>
            <person name="Hishigaki H."/>
            <person name="Watanabe T."/>
            <person name="Sugiyama A."/>
            <person name="Takemoto M."/>
            <person name="Kawakami B."/>
            <person name="Yamazaki M."/>
            <person name="Watanabe K."/>
            <person name="Kumagai A."/>
            <person name="Itakura S."/>
            <person name="Fukuzumi Y."/>
            <person name="Fujimori Y."/>
            <person name="Komiyama M."/>
            <person name="Tashiro H."/>
            <person name="Tanigami A."/>
            <person name="Fujiwara T."/>
            <person name="Ono T."/>
            <person name="Yamada K."/>
            <person name="Fujii Y."/>
            <person name="Ozaki K."/>
            <person name="Hirao M."/>
            <person name="Ohmori Y."/>
            <person name="Kawabata A."/>
            <person name="Hikiji T."/>
            <person name="Kobatake N."/>
            <person name="Inagaki H."/>
            <person name="Ikema Y."/>
            <person name="Okamoto S."/>
            <person name="Okitani R."/>
            <person name="Kawakami T."/>
            <person name="Noguchi S."/>
            <person name="Itoh T."/>
            <person name="Shigeta K."/>
            <person name="Senba T."/>
            <person name="Matsumura K."/>
            <person name="Nakajima Y."/>
            <person name="Mizuno T."/>
            <person name="Morinaga M."/>
            <person name="Sasaki M."/>
            <person name="Togashi T."/>
            <person name="Oyama M."/>
            <person name="Hata H."/>
            <person name="Watanabe M."/>
            <person name="Komatsu T."/>
            <person name="Mizushima-Sugano J."/>
            <person name="Satoh T."/>
            <person name="Shirai Y."/>
            <person name="Takahashi Y."/>
            <person name="Nakagawa K."/>
            <person name="Okumura K."/>
            <person name="Nagase T."/>
            <person name="Nomura N."/>
            <person name="Kikuchi H."/>
            <person name="Masuho Y."/>
            <person name="Yamashita R."/>
            <person name="Nakai K."/>
            <person name="Yada T."/>
            <person name="Nakamura Y."/>
            <person name="Ohara O."/>
            <person name="Isogai T."/>
            <person name="Sugano S."/>
        </authorList>
    </citation>
    <scope>NUCLEOTIDE SEQUENCE [LARGE SCALE MRNA] (ISOFORMS 2 AND 3)</scope>
</reference>
<reference key="3">
    <citation type="journal article" date="2004" name="Nature">
        <title>The DNA sequence and comparative analysis of human chromosome 5.</title>
        <authorList>
            <person name="Schmutz J."/>
            <person name="Martin J."/>
            <person name="Terry A."/>
            <person name="Couronne O."/>
            <person name="Grimwood J."/>
            <person name="Lowry S."/>
            <person name="Gordon L.A."/>
            <person name="Scott D."/>
            <person name="Xie G."/>
            <person name="Huang W."/>
            <person name="Hellsten U."/>
            <person name="Tran-Gyamfi M."/>
            <person name="She X."/>
            <person name="Prabhakar S."/>
            <person name="Aerts A."/>
            <person name="Altherr M."/>
            <person name="Bajorek E."/>
            <person name="Black S."/>
            <person name="Branscomb E."/>
            <person name="Caoile C."/>
            <person name="Challacombe J.F."/>
            <person name="Chan Y.M."/>
            <person name="Denys M."/>
            <person name="Detter J.C."/>
            <person name="Escobar J."/>
            <person name="Flowers D."/>
            <person name="Fotopulos D."/>
            <person name="Glavina T."/>
            <person name="Gomez M."/>
            <person name="Gonzales E."/>
            <person name="Goodstein D."/>
            <person name="Grigoriev I."/>
            <person name="Groza M."/>
            <person name="Hammon N."/>
            <person name="Hawkins T."/>
            <person name="Haydu L."/>
            <person name="Israni S."/>
            <person name="Jett J."/>
            <person name="Kadner K."/>
            <person name="Kimball H."/>
            <person name="Kobayashi A."/>
            <person name="Lopez F."/>
            <person name="Lou Y."/>
            <person name="Martinez D."/>
            <person name="Medina C."/>
            <person name="Morgan J."/>
            <person name="Nandkeshwar R."/>
            <person name="Noonan J.P."/>
            <person name="Pitluck S."/>
            <person name="Pollard M."/>
            <person name="Predki P."/>
            <person name="Priest J."/>
            <person name="Ramirez L."/>
            <person name="Retterer J."/>
            <person name="Rodriguez A."/>
            <person name="Rogers S."/>
            <person name="Salamov A."/>
            <person name="Salazar A."/>
            <person name="Thayer N."/>
            <person name="Tice H."/>
            <person name="Tsai M."/>
            <person name="Ustaszewska A."/>
            <person name="Vo N."/>
            <person name="Wheeler J."/>
            <person name="Wu K."/>
            <person name="Yang J."/>
            <person name="Dickson M."/>
            <person name="Cheng J.-F."/>
            <person name="Eichler E.E."/>
            <person name="Olsen A."/>
            <person name="Pennacchio L.A."/>
            <person name="Rokhsar D.S."/>
            <person name="Richardson P."/>
            <person name="Lucas S.M."/>
            <person name="Myers R.M."/>
            <person name="Rubin E.M."/>
        </authorList>
    </citation>
    <scope>NUCLEOTIDE SEQUENCE [LARGE SCALE GENOMIC DNA]</scope>
</reference>
<reference key="4">
    <citation type="submission" date="2005-09" db="EMBL/GenBank/DDBJ databases">
        <authorList>
            <person name="Mural R.J."/>
            <person name="Istrail S."/>
            <person name="Sutton G.G."/>
            <person name="Florea L."/>
            <person name="Halpern A.L."/>
            <person name="Mobarry C.M."/>
            <person name="Lippert R."/>
            <person name="Walenz B."/>
            <person name="Shatkay H."/>
            <person name="Dew I."/>
            <person name="Miller J.R."/>
            <person name="Flanigan M.J."/>
            <person name="Edwards N.J."/>
            <person name="Bolanos R."/>
            <person name="Fasulo D."/>
            <person name="Halldorsson B.V."/>
            <person name="Hannenhalli S."/>
            <person name="Turner R."/>
            <person name="Yooseph S."/>
            <person name="Lu F."/>
            <person name="Nusskern D.R."/>
            <person name="Shue B.C."/>
            <person name="Zheng X.H."/>
            <person name="Zhong F."/>
            <person name="Delcher A.L."/>
            <person name="Huson D.H."/>
            <person name="Kravitz S.A."/>
            <person name="Mouchard L."/>
            <person name="Reinert K."/>
            <person name="Remington K.A."/>
            <person name="Clark A.G."/>
            <person name="Waterman M.S."/>
            <person name="Eichler E.E."/>
            <person name="Adams M.D."/>
            <person name="Hunkapiller M.W."/>
            <person name="Myers E.W."/>
            <person name="Venter J.C."/>
        </authorList>
    </citation>
    <scope>NUCLEOTIDE SEQUENCE [LARGE SCALE GENOMIC DNA]</scope>
</reference>
<reference key="5">
    <citation type="journal article" date="2004" name="Genome Res.">
        <title>The status, quality, and expansion of the NIH full-length cDNA project: the Mammalian Gene Collection (MGC).</title>
        <authorList>
            <consortium name="The MGC Project Team"/>
        </authorList>
    </citation>
    <scope>NUCLEOTIDE SEQUENCE [LARGE SCALE MRNA] (ISOFORM 1)</scope>
    <source>
        <tissue>Pancreas</tissue>
    </source>
</reference>
<reference key="6">
    <citation type="submission" date="1997-06" db="EMBL/GenBank/DDBJ databases">
        <title>High resolution physical and transcription maps of the Cri-du-chat critical region.</title>
        <authorList>
            <person name="Simmons A.D."/>
            <person name="Lovett M.L."/>
        </authorList>
    </citation>
    <scope>NUCLEOTIDE SEQUENCE [MRNA] OF 379-910 (ISOFORM 1)</scope>
    <scope>VARIANT LEU-622</scope>
</reference>
<reference key="7">
    <citation type="journal article" date="2001" name="Genes Dev.">
        <title>A conserved ubiquitin ligase of the nuclear envelope/endoplasmic reticulum that functions in both ER-associated and Matalpha2 repressor degradation.</title>
        <authorList>
            <person name="Swanson R."/>
            <person name="Locher M."/>
            <person name="Hochstrasser M."/>
        </authorList>
    </citation>
    <scope>IDENTIFICATION</scope>
</reference>
<reference key="8">
    <citation type="journal article" date="2005" name="Biochem. J.">
        <title>TEB4 is a C4HC3 RING finger-containing ubiquitin ligase of the endoplasmic reticulum.</title>
        <authorList>
            <person name="Hassink G."/>
            <person name="Kikkert M."/>
            <person name="van Voorden S."/>
            <person name="Lee S.-J."/>
            <person name="Spaapen R."/>
            <person name="van Laar T."/>
            <person name="Coleman C.S."/>
            <person name="Bartee E."/>
            <person name="Frueh K."/>
            <person name="Chau V."/>
            <person name="Wiertz E."/>
        </authorList>
    </citation>
    <scope>FUNCTION</scope>
    <scope>TISSUE SPECIFICITY</scope>
    <scope>SUBCELLULAR LOCATION</scope>
    <scope>TOPOLOGY</scope>
    <scope>UBIQUITINATION</scope>
    <scope>MUTAGENESIS OF CYS-9</scope>
    <scope>DOMAIN</scope>
    <scope>PATHWAY</scope>
</reference>
<reference key="9">
    <citation type="journal article" date="2006" name="J. Biol. Chem.">
        <title>Membrane topology of the yeast endoplasmic reticulum-localized ubiquitin ligase Doa10 and comparison with its human ortholog TEB4 (MARCH-VI).</title>
        <authorList>
            <person name="Kreft S.G."/>
            <person name="Wang L."/>
            <person name="Hochstrasser M."/>
        </authorList>
    </citation>
    <scope>TOPOLOGY</scope>
</reference>
<reference key="10">
    <citation type="journal article" date="2009" name="Mol. Cell. Biol.">
        <title>The E3 ubiquitin ligase TEB4 mediates degradation of type 2 iodothyronine deiodinase.</title>
        <authorList>
            <person name="Zavacki A.M."/>
            <person name="Arrojo E Drigo R."/>
            <person name="Freitas B.C."/>
            <person name="Chung M."/>
            <person name="Harney J.W."/>
            <person name="Egri P."/>
            <person name="Wittmann G."/>
            <person name="Fekete C."/>
            <person name="Gereben B."/>
            <person name="Bianco A.C."/>
        </authorList>
    </citation>
    <scope>FUNCTION AS AN E3 UBIQUITIN LIGASE FOR DIO2</scope>
    <scope>INTERACTION WITH DIO2</scope>
</reference>
<reference key="11">
    <citation type="journal article" date="2012" name="Proc. Natl. Acad. Sci. U.S.A.">
        <title>N-terminal acetylome analyses and functional insights of the N-terminal acetyltransferase NatB.</title>
        <authorList>
            <person name="Van Damme P."/>
            <person name="Lasa M."/>
            <person name="Polevoda B."/>
            <person name="Gazquez C."/>
            <person name="Elosegui-Artola A."/>
            <person name="Kim D.S."/>
            <person name="De Juan-Pardo E."/>
            <person name="Demeyer K."/>
            <person name="Hole K."/>
            <person name="Larrea E."/>
            <person name="Timmerman E."/>
            <person name="Prieto J."/>
            <person name="Arnesen T."/>
            <person name="Sherman F."/>
            <person name="Gevaert K."/>
            <person name="Aldabe R."/>
        </authorList>
    </citation>
    <scope>ACETYLATION [LARGE SCALE ANALYSIS] AT MET-1</scope>
    <scope>IDENTIFICATION BY MASS SPECTROMETRY [LARGE SCALE ANALYSIS]</scope>
</reference>
<reference key="12">
    <citation type="journal article" date="2014" name="Mol. Cell. Biol.">
        <title>The E3 ubiquitin ligase MARCH6 degrades squalene monooxygenase and affects 3-hydroxy-3-methyl-glutaryl coenzyme A reductase and the cholesterol synthesis pathway.</title>
        <authorList>
            <person name="Zelcer N."/>
            <person name="Sharpe L.J."/>
            <person name="Loregger A."/>
            <person name="Kristiana I."/>
            <person name="Cook E.C."/>
            <person name="Phan L."/>
            <person name="Stevenson J."/>
            <person name="Brown A.J."/>
        </authorList>
    </citation>
    <scope>FUNCTION</scope>
    <scope>CATALYTIC ACTIVITY</scope>
    <scope>INTERACTION WITH SQLE</scope>
    <scope>MUTAGENESIS OF CYS-9</scope>
    <scope>DOMAIN</scope>
</reference>
<reference key="13">
    <citation type="journal article" date="2014" name="Exp. Cell Res.">
        <title>Ubiquitin-specific protease 19 regulates the stability of the E3 ubiquitin ligase MARCH6.</title>
        <authorList>
            <person name="Nakamura N."/>
            <person name="Harada K."/>
            <person name="Kato M."/>
            <person name="Hirose S."/>
        </authorList>
    </citation>
    <scope>FUNCTION</scope>
    <scope>DEUBIQUITINATION BY USP19</scope>
</reference>
<reference key="14">
    <citation type="journal article" date="2018" name="EMBO Rep.">
        <title>MARCH6 and TRC8 facilitate the quality control of cytosolic and tail-anchored proteins.</title>
        <authorList>
            <person name="Stefanovic-Barrett S."/>
            <person name="Dickson A.S."/>
            <person name="Burr S.P."/>
            <person name="Williamson J.C."/>
            <person name="Lobb I.T."/>
            <person name="van den Boomen D.J."/>
            <person name="Lehner P.J."/>
            <person name="Nathan J.A."/>
        </authorList>
    </citation>
    <scope>FUNCTION</scope>
    <scope>MUTAGENESIS OF CYS-9</scope>
    <scope>CATALYTIC ACTIVITY</scope>
</reference>
<reference key="15">
    <citation type="journal article" date="2019" name="Nat. Commun.">
        <title>Unstable TTTTA/TTTCA expansions in MARCH6 are associated with Familial Adult Myoclonic Epilepsy type 3.</title>
        <authorList>
            <consortium name="FAME consortium"/>
            <person name="Florian R.T."/>
            <person name="Kraft F."/>
            <person name="Leitao E."/>
            <person name="Kaya S."/>
            <person name="Klebe S."/>
            <person name="Magnin E."/>
            <person name="van Rootselaar A.F."/>
            <person name="Buratti J."/>
            <person name="Kuehnel T."/>
            <person name="Schroeder C."/>
            <person name="Giesselmann S."/>
            <person name="Tschernoster N."/>
            <person name="Altmueller J."/>
            <person name="Lamiral A."/>
            <person name="Keren B."/>
            <person name="Nava C."/>
            <person name="Bouteiller D."/>
            <person name="Forlani S."/>
            <person name="Jornea L."/>
            <person name="Kubica R."/>
            <person name="Ye T."/>
            <person name="Plassard D."/>
            <person name="Jost B."/>
            <person name="Meyer V."/>
            <person name="Deleuze J.F."/>
            <person name="Delpu Y."/>
            <person name="Avarello M.D.M."/>
            <person name="Vijfhuizen L.S."/>
            <person name="Rudolf G."/>
            <person name="Hirsch E."/>
            <person name="Kroes T."/>
            <person name="Reif P.S."/>
            <person name="Rosenow F."/>
            <person name="Ganos C."/>
            <person name="Vidailhet M."/>
            <person name="Thivard L."/>
            <person name="Mathieu A."/>
            <person name="Bourgeron T."/>
            <person name="Kurth I."/>
            <person name="Rafehi H."/>
            <person name="Steenpass L."/>
            <person name="Horsthemke B."/>
            <person name="LeGuern E."/>
            <person name="Klein K.M."/>
            <person name="Labauge P."/>
            <person name="Bennett M.F."/>
            <person name="Bahlo M."/>
            <person name="Gecz J."/>
            <person name="Corbett M.A."/>
            <person name="Tijssen M.A.J."/>
            <person name="van den Maagdenberg A.M.J.M."/>
            <person name="Depienne C."/>
        </authorList>
    </citation>
    <scope>INVOLVEMENT IN FAME3</scope>
</reference>
<reference key="16">
    <citation type="journal article" date="2019" name="J. Biol. Chem.">
        <title>N-terminal acetylation and the N-end rule pathway control degradation of the lipid droplet protein PLIN2.</title>
        <authorList>
            <person name="Nguyen K.T."/>
            <person name="Lee C.S."/>
            <person name="Mun S.H."/>
            <person name="Truong N.T."/>
            <person name="Park S.K."/>
            <person name="Hwang C.S."/>
        </authorList>
    </citation>
    <scope>FUNCTION</scope>
    <scope>MUTAGENESIS OF CYS-9</scope>
    <scope>CATALYTIC ACTIVITY</scope>
</reference>
<reference key="17">
    <citation type="journal article" date="2020" name="Biochem. J.">
        <title>The cholesterol synthesis enzyme lanosterol 14alpha-demethylase is post-translationally regulated by the E3 ubiquitin ligase MARCH6.</title>
        <authorList>
            <person name="Scott N.A."/>
            <person name="Sharpe L.J."/>
            <person name="Capell-Hattam I.M."/>
            <person name="Gullo S.J."/>
            <person name="Luu W."/>
            <person name="Brown A.J."/>
        </authorList>
    </citation>
    <scope>FUNCTION</scope>
    <scope>MUTAGENESIS OF CYS-9</scope>
    <scope>CATALYTIC ACTIVITY</scope>
</reference>
<reference key="18">
    <citation type="journal article" date="2022" name="Nat. Cell Biol.">
        <title>The MARCHF6 E3 ubiquitin ligase acts as an NADPH sensor for the regulation of ferroptosis.</title>
        <authorList>
            <person name="Nguyen K.T."/>
            <person name="Mun S.H."/>
            <person name="Yang J."/>
            <person name="Lee J."/>
            <person name="Seok O.H."/>
            <person name="Kim E."/>
            <person name="Kim D."/>
            <person name="An S.Y."/>
            <person name="Seo D.Y."/>
            <person name="Suh J.Y."/>
            <person name="Lee Y."/>
            <person name="Hwang C.S."/>
        </authorList>
    </citation>
    <scope>FUNCTION</scope>
    <scope>MUTAGENESIS OF CYS-9; GLY-885 AND LEU-888</scope>
</reference>
<reference key="19">
    <citation type="journal article" date="2023" name="J. Lipid Res.">
        <title>Cholesterol synthesis enzyme SC4MOL is fine-tuned by sterols and targeted for degradation by the E3 ligase MARCHF6.</title>
        <authorList>
            <person name="Qian L."/>
            <person name="Scott N.A."/>
            <person name="Capell-Hattam I.M."/>
            <person name="Draper E.A."/>
            <person name="Fenton N.M."/>
            <person name="Luu W."/>
            <person name="Sharpe L.J."/>
            <person name="Brown A.J."/>
        </authorList>
    </citation>
    <scope>FUNCTION</scope>
</reference>
<reference key="20">
    <citation type="journal article" date="2024" name="J. Biol. Chem.">
        <title>Delineation of the substrate recognition domain of MARCHF6 E3 ubiquitin ligase in the Ac/N-degron pathway and its regulatory role in ferroptosis.</title>
        <authorList>
            <person name="Yang J."/>
            <person name="Kim S.Y."/>
            <person name="Hwang C.S."/>
        </authorList>
    </citation>
    <scope>FUNCTION</scope>
    <scope>MUTAGENESIS OF LEU-571</scope>
</reference>
<name>MARH6_HUMAN</name>
<gene>
    <name evidence="24" type="primary">MARCHF6</name>
    <name type="synonym">KIAA0597</name>
    <name type="synonym">MARCH6</name>
    <name type="synonym">RNF176</name>
    <name type="synonym">TEB4</name>
</gene>
<accession>O60337</accession>
<accession>A5PKZ4</accession>
<accession>B4DKJ2</accession>
<accession>B4DT33</accession>
<accession>D3DTC8</accession>
<accession>O14670</accession>
<accession>Q86X77</accession>
<dbReference type="EC" id="2.3.2.27" evidence="5 7 9 10 12"/>
<dbReference type="EMBL" id="AB011169">
    <property type="protein sequence ID" value="BAA25523.1"/>
    <property type="status" value="ALT_INIT"/>
    <property type="molecule type" value="mRNA"/>
</dbReference>
<dbReference type="EMBL" id="AK296585">
    <property type="protein sequence ID" value="BAG59204.1"/>
    <property type="molecule type" value="mRNA"/>
</dbReference>
<dbReference type="EMBL" id="AK300034">
    <property type="protein sequence ID" value="BAG61845.1"/>
    <property type="molecule type" value="mRNA"/>
</dbReference>
<dbReference type="EMBL" id="AC012640">
    <property type="status" value="NOT_ANNOTATED_CDS"/>
    <property type="molecule type" value="Genomic_DNA"/>
</dbReference>
<dbReference type="EMBL" id="AC092336">
    <property type="status" value="NOT_ANNOTATED_CDS"/>
    <property type="molecule type" value="Genomic_DNA"/>
</dbReference>
<dbReference type="EMBL" id="CH471102">
    <property type="protein sequence ID" value="EAX08065.1"/>
    <property type="molecule type" value="Genomic_DNA"/>
</dbReference>
<dbReference type="EMBL" id="CH471102">
    <property type="protein sequence ID" value="EAX08066.1"/>
    <property type="molecule type" value="Genomic_DNA"/>
</dbReference>
<dbReference type="EMBL" id="BC046148">
    <property type="protein sequence ID" value="AAH46148.1"/>
    <property type="molecule type" value="mRNA"/>
</dbReference>
<dbReference type="EMBL" id="BC136461">
    <property type="protein sequence ID" value="AAI36462.1"/>
    <property type="molecule type" value="mRNA"/>
</dbReference>
<dbReference type="EMBL" id="BC136462">
    <property type="protein sequence ID" value="AAI36463.1"/>
    <property type="molecule type" value="mRNA"/>
</dbReference>
<dbReference type="EMBL" id="BC142679">
    <property type="protein sequence ID" value="AAI42680.1"/>
    <property type="molecule type" value="mRNA"/>
</dbReference>
<dbReference type="EMBL" id="BC142694">
    <property type="protein sequence ID" value="AAI42695.1"/>
    <property type="molecule type" value="mRNA"/>
</dbReference>
<dbReference type="EMBL" id="AF009301">
    <property type="protein sequence ID" value="AAB66840.1"/>
    <property type="status" value="ALT_SEQ"/>
    <property type="molecule type" value="mRNA"/>
</dbReference>
<dbReference type="CCDS" id="CCDS34135.1">
    <molecule id="O60337-4"/>
</dbReference>
<dbReference type="CCDS" id="CCDS59487.1">
    <molecule id="O60337-5"/>
</dbReference>
<dbReference type="CCDS" id="CCDS59488.1">
    <molecule id="O60337-6"/>
</dbReference>
<dbReference type="PIR" id="T00268">
    <property type="entry name" value="T00268"/>
</dbReference>
<dbReference type="RefSeq" id="NP_001257589.1">
    <molecule id="O60337-5"/>
    <property type="nucleotide sequence ID" value="NM_001270660.2"/>
</dbReference>
<dbReference type="RefSeq" id="NP_001257590.1">
    <molecule id="O60337-6"/>
    <property type="nucleotide sequence ID" value="NM_001270661.2"/>
</dbReference>
<dbReference type="RefSeq" id="NP_005876.2">
    <molecule id="O60337-4"/>
    <property type="nucleotide sequence ID" value="NM_005885.3"/>
</dbReference>
<dbReference type="SMR" id="O60337"/>
<dbReference type="BioGRID" id="115587">
    <property type="interactions" value="62"/>
</dbReference>
<dbReference type="DIP" id="DIP-56134N"/>
<dbReference type="FunCoup" id="O60337">
    <property type="interactions" value="3228"/>
</dbReference>
<dbReference type="IntAct" id="O60337">
    <property type="interactions" value="32"/>
</dbReference>
<dbReference type="MINT" id="O60337"/>
<dbReference type="STRING" id="9606.ENSP00000274140"/>
<dbReference type="TCDB" id="8.A.159.1.11">
    <property type="family name" value="the march ubiquitin ligase (march) family"/>
</dbReference>
<dbReference type="iPTMnet" id="O60337"/>
<dbReference type="PhosphoSitePlus" id="O60337"/>
<dbReference type="SwissPalm" id="O60337"/>
<dbReference type="BioMuta" id="MARCH6"/>
<dbReference type="jPOST" id="O60337"/>
<dbReference type="MassIVE" id="O60337"/>
<dbReference type="PaxDb" id="9606-ENSP00000274140"/>
<dbReference type="PeptideAtlas" id="O60337"/>
<dbReference type="ProteomicsDB" id="4463"/>
<dbReference type="ProteomicsDB" id="49363">
    <molecule id="O60337-4"/>
</dbReference>
<dbReference type="ProteomicsDB" id="5070"/>
<dbReference type="Pumba" id="O60337"/>
<dbReference type="Antibodypedia" id="22463">
    <property type="antibodies" value="156 antibodies from 29 providers"/>
</dbReference>
<dbReference type="DNASU" id="10299"/>
<dbReference type="Ensembl" id="ENST00000274140.10">
    <molecule id="O60337-4"/>
    <property type="protein sequence ID" value="ENSP00000274140.4"/>
    <property type="gene ID" value="ENSG00000145495.17"/>
</dbReference>
<dbReference type="Ensembl" id="ENST00000449913.6">
    <molecule id="O60337-5"/>
    <property type="protein sequence ID" value="ENSP00000414643.2"/>
    <property type="gene ID" value="ENSG00000145495.17"/>
</dbReference>
<dbReference type="Ensembl" id="ENST00000503788.5">
    <molecule id="O60337-6"/>
    <property type="protein sequence ID" value="ENSP00000425930.1"/>
    <property type="gene ID" value="ENSG00000145495.17"/>
</dbReference>
<dbReference type="GeneID" id="10299"/>
<dbReference type="KEGG" id="hsa:10299"/>
<dbReference type="MANE-Select" id="ENST00000274140.10">
    <property type="protein sequence ID" value="ENSP00000274140.4"/>
    <property type="RefSeq nucleotide sequence ID" value="NM_005885.4"/>
    <property type="RefSeq protein sequence ID" value="NP_005876.2"/>
</dbReference>
<dbReference type="UCSC" id="uc003jet.3">
    <molecule id="O60337-4"/>
    <property type="organism name" value="human"/>
</dbReference>
<dbReference type="AGR" id="HGNC:30550"/>
<dbReference type="CTD" id="10299"/>
<dbReference type="DisGeNET" id="10299"/>
<dbReference type="GeneCards" id="MARCHF6"/>
<dbReference type="HGNC" id="HGNC:30550">
    <property type="gene designation" value="MARCHF6"/>
</dbReference>
<dbReference type="HPA" id="ENSG00000145495">
    <property type="expression patterns" value="Low tissue specificity"/>
</dbReference>
<dbReference type="MalaCards" id="MARCHF6"/>
<dbReference type="MIM" id="613297">
    <property type="type" value="gene"/>
</dbReference>
<dbReference type="MIM" id="613608">
    <property type="type" value="phenotype"/>
</dbReference>
<dbReference type="neXtProt" id="NX_O60337"/>
<dbReference type="OpenTargets" id="ENSG00000145495"/>
<dbReference type="Orphanet" id="86814">
    <property type="disease" value="Familialadult myoclonic epilepsy"/>
</dbReference>
<dbReference type="VEuPathDB" id="HostDB:ENSG00000145495"/>
<dbReference type="eggNOG" id="KOG1609">
    <property type="taxonomic scope" value="Eukaryota"/>
</dbReference>
<dbReference type="GeneTree" id="ENSGT00940000155171"/>
<dbReference type="HOGENOM" id="CLU_006373_1_0_1"/>
<dbReference type="InParanoid" id="O60337"/>
<dbReference type="OMA" id="WLHYSLV"/>
<dbReference type="OrthoDB" id="1108038at2759"/>
<dbReference type="PAN-GO" id="O60337">
    <property type="GO annotations" value="2 GO annotations based on evolutionary models"/>
</dbReference>
<dbReference type="PhylomeDB" id="O60337"/>
<dbReference type="TreeFam" id="TF105777"/>
<dbReference type="BioCyc" id="MetaCyc:ENSG00000145495-MONOMER"/>
<dbReference type="BRENDA" id="2.3.2.27">
    <property type="organism ID" value="2681"/>
</dbReference>
<dbReference type="PathwayCommons" id="O60337"/>
<dbReference type="Reactome" id="R-HSA-901032">
    <property type="pathway name" value="ER Quality Control Compartment (ERQC)"/>
</dbReference>
<dbReference type="SignaLink" id="O60337"/>
<dbReference type="SIGNOR" id="O60337"/>
<dbReference type="UniPathway" id="UPA00143"/>
<dbReference type="BioGRID-ORCS" id="10299">
    <property type="hits" value="39 hits in 1127 CRISPR screens"/>
</dbReference>
<dbReference type="ChiTaRS" id="MARCH6">
    <property type="organism name" value="human"/>
</dbReference>
<dbReference type="GeneWiki" id="MARCH6"/>
<dbReference type="GenomeRNAi" id="10299"/>
<dbReference type="Pharos" id="O60337">
    <property type="development level" value="Tbio"/>
</dbReference>
<dbReference type="PRO" id="PR:O60337"/>
<dbReference type="Proteomes" id="UP000005640">
    <property type="component" value="Chromosome 5"/>
</dbReference>
<dbReference type="RNAct" id="O60337">
    <property type="molecule type" value="protein"/>
</dbReference>
<dbReference type="Bgee" id="ENSG00000145495">
    <property type="expression patterns" value="Expressed in Brodmann (1909) area 23 and 210 other cell types or tissues"/>
</dbReference>
<dbReference type="ExpressionAtlas" id="O60337">
    <property type="expression patterns" value="baseline and differential"/>
</dbReference>
<dbReference type="GO" id="GO:0005783">
    <property type="term" value="C:endoplasmic reticulum"/>
    <property type="evidence" value="ECO:0000314"/>
    <property type="project" value="HPA"/>
</dbReference>
<dbReference type="GO" id="GO:0005789">
    <property type="term" value="C:endoplasmic reticulum membrane"/>
    <property type="evidence" value="ECO:0000314"/>
    <property type="project" value="UniProtKB"/>
</dbReference>
<dbReference type="GO" id="GO:0044322">
    <property type="term" value="C:endoplasmic reticulum quality control compartment"/>
    <property type="evidence" value="ECO:0007669"/>
    <property type="project" value="GOC"/>
</dbReference>
<dbReference type="GO" id="GO:0000835">
    <property type="term" value="C:ER ubiquitin ligase complex"/>
    <property type="evidence" value="ECO:0000305"/>
    <property type="project" value="ParkinsonsUK-UCL"/>
</dbReference>
<dbReference type="GO" id="GO:0016020">
    <property type="term" value="C:membrane"/>
    <property type="evidence" value="ECO:0000314"/>
    <property type="project" value="ParkinsonsUK-UCL"/>
</dbReference>
<dbReference type="GO" id="GO:0019899">
    <property type="term" value="F:enzyme binding"/>
    <property type="evidence" value="ECO:0000353"/>
    <property type="project" value="UniProtKB"/>
</dbReference>
<dbReference type="GO" id="GO:0031624">
    <property type="term" value="F:ubiquitin conjugating enzyme binding"/>
    <property type="evidence" value="ECO:0000353"/>
    <property type="project" value="UniProtKB"/>
</dbReference>
<dbReference type="GO" id="GO:0061630">
    <property type="term" value="F:ubiquitin protein ligase activity"/>
    <property type="evidence" value="ECO:0000314"/>
    <property type="project" value="UniProtKB"/>
</dbReference>
<dbReference type="GO" id="GO:0004842">
    <property type="term" value="F:ubiquitin-protein transferase activity"/>
    <property type="evidence" value="ECO:0000314"/>
    <property type="project" value="UniProtKB"/>
</dbReference>
<dbReference type="GO" id="GO:1990381">
    <property type="term" value="F:ubiquitin-specific protease binding"/>
    <property type="evidence" value="ECO:0000353"/>
    <property type="project" value="ParkinsonsUK-UCL"/>
</dbReference>
<dbReference type="GO" id="GO:0008270">
    <property type="term" value="F:zinc ion binding"/>
    <property type="evidence" value="ECO:0007669"/>
    <property type="project" value="UniProtKB-KW"/>
</dbReference>
<dbReference type="GO" id="GO:1904380">
    <property type="term" value="P:endoplasmic reticulum mannose trimming"/>
    <property type="evidence" value="ECO:0000304"/>
    <property type="project" value="Reactome"/>
</dbReference>
<dbReference type="GO" id="GO:0036503">
    <property type="term" value="P:ERAD pathway"/>
    <property type="evidence" value="ECO:0000318"/>
    <property type="project" value="GO_Central"/>
</dbReference>
<dbReference type="GO" id="GO:0010498">
    <property type="term" value="P:proteasomal protein catabolic process"/>
    <property type="evidence" value="ECO:0000314"/>
    <property type="project" value="ParkinsonsUK-UCL"/>
</dbReference>
<dbReference type="GO" id="GO:0043161">
    <property type="term" value="P:proteasome-mediated ubiquitin-dependent protein catabolic process"/>
    <property type="evidence" value="ECO:0000314"/>
    <property type="project" value="UniProtKB"/>
</dbReference>
<dbReference type="GO" id="GO:0070936">
    <property type="term" value="P:protein K48-linked ubiquitination"/>
    <property type="evidence" value="ECO:0000314"/>
    <property type="project" value="UniProtKB"/>
</dbReference>
<dbReference type="GO" id="GO:0016567">
    <property type="term" value="P:protein ubiquitination"/>
    <property type="evidence" value="ECO:0000314"/>
    <property type="project" value="UniProtKB"/>
</dbReference>
<dbReference type="CDD" id="cd16702">
    <property type="entry name" value="RING_CH-C4HC3_MARCH6"/>
    <property type="match status" value="1"/>
</dbReference>
<dbReference type="FunFam" id="3.30.40.10:FF:000096">
    <property type="entry name" value="E3 ubiquitin-protein ligase MARCH6"/>
    <property type="match status" value="1"/>
</dbReference>
<dbReference type="Gene3D" id="3.30.40.10">
    <property type="entry name" value="Zinc/RING finger domain, C3HC4 (zinc finger)"/>
    <property type="match status" value="1"/>
</dbReference>
<dbReference type="InterPro" id="IPR056521">
    <property type="entry name" value="MARCHF6-like_C"/>
</dbReference>
<dbReference type="InterPro" id="IPR011016">
    <property type="entry name" value="Znf_RING-CH"/>
</dbReference>
<dbReference type="InterPro" id="IPR013083">
    <property type="entry name" value="Znf_RING/FYVE/PHD"/>
</dbReference>
<dbReference type="PANTHER" id="PTHR13145:SF0">
    <property type="entry name" value="E3 UBIQUITIN-PROTEIN LIGASE MARCHF6"/>
    <property type="match status" value="1"/>
</dbReference>
<dbReference type="PANTHER" id="PTHR13145">
    <property type="entry name" value="SSM4 PROTEIN"/>
    <property type="match status" value="1"/>
</dbReference>
<dbReference type="Pfam" id="PF23113">
    <property type="entry name" value="MARCHF6_C"/>
    <property type="match status" value="1"/>
</dbReference>
<dbReference type="Pfam" id="PF12906">
    <property type="entry name" value="RINGv"/>
    <property type="match status" value="1"/>
</dbReference>
<dbReference type="SMART" id="SM00744">
    <property type="entry name" value="RINGv"/>
    <property type="match status" value="1"/>
</dbReference>
<dbReference type="SUPFAM" id="SSF57850">
    <property type="entry name" value="RING/U-box"/>
    <property type="match status" value="1"/>
</dbReference>
<dbReference type="PROSITE" id="PS51292">
    <property type="entry name" value="ZF_RING_CH"/>
    <property type="match status" value="1"/>
</dbReference>